<reference key="1">
    <citation type="journal article" date="2005" name="J. Bacteriol.">
        <title>Swine and poultry pathogens: the complete genome sequences of two strains of Mycoplasma hyopneumoniae and a strain of Mycoplasma synoviae.</title>
        <authorList>
            <person name="Vasconcelos A.T.R."/>
            <person name="Ferreira H.B."/>
            <person name="Bizarro C.V."/>
            <person name="Bonatto S.L."/>
            <person name="Carvalho M.O."/>
            <person name="Pinto P.M."/>
            <person name="Almeida D.F."/>
            <person name="Almeida L.G.P."/>
            <person name="Almeida R."/>
            <person name="Alves-Junior L."/>
            <person name="Assuncao E.N."/>
            <person name="Azevedo V.A.C."/>
            <person name="Bogo M.R."/>
            <person name="Brigido M.M."/>
            <person name="Brocchi M."/>
            <person name="Burity H.A."/>
            <person name="Camargo A.A."/>
            <person name="Camargo S.S."/>
            <person name="Carepo M.S."/>
            <person name="Carraro D.M."/>
            <person name="de Mattos Cascardo J.C."/>
            <person name="Castro L.A."/>
            <person name="Cavalcanti G."/>
            <person name="Chemale G."/>
            <person name="Collevatti R.G."/>
            <person name="Cunha C.W."/>
            <person name="Dallagiovanna B."/>
            <person name="Dambros B.P."/>
            <person name="Dellagostin O.A."/>
            <person name="Falcao C."/>
            <person name="Fantinatti-Garboggini F."/>
            <person name="Felipe M.S.S."/>
            <person name="Fiorentin L."/>
            <person name="Franco G.R."/>
            <person name="Freitas N.S.A."/>
            <person name="Frias D."/>
            <person name="Grangeiro T.B."/>
            <person name="Grisard E.C."/>
            <person name="Guimaraes C.T."/>
            <person name="Hungria M."/>
            <person name="Jardim S.N."/>
            <person name="Krieger M.A."/>
            <person name="Laurino J.P."/>
            <person name="Lima L.F.A."/>
            <person name="Lopes M.I."/>
            <person name="Loreto E.L.S."/>
            <person name="Madeira H.M.F."/>
            <person name="Manfio G.P."/>
            <person name="Maranhao A.Q."/>
            <person name="Martinkovics C.T."/>
            <person name="Medeiros S.R.B."/>
            <person name="Moreira M.A.M."/>
            <person name="Neiva M."/>
            <person name="Ramalho-Neto C.E."/>
            <person name="Nicolas M.F."/>
            <person name="Oliveira S.C."/>
            <person name="Paixao R.F.C."/>
            <person name="Pedrosa F.O."/>
            <person name="Pena S.D.J."/>
            <person name="Pereira M."/>
            <person name="Pereira-Ferrari L."/>
            <person name="Piffer I."/>
            <person name="Pinto L.S."/>
            <person name="Potrich D.P."/>
            <person name="Salim A.C.M."/>
            <person name="Santos F.R."/>
            <person name="Schmitt R."/>
            <person name="Schneider M.P.C."/>
            <person name="Schrank A."/>
            <person name="Schrank I.S."/>
            <person name="Schuck A.F."/>
            <person name="Seuanez H.N."/>
            <person name="Silva D.W."/>
            <person name="Silva R."/>
            <person name="Silva S.C."/>
            <person name="Soares C.M.A."/>
            <person name="Souza K.R.L."/>
            <person name="Souza R.C."/>
            <person name="Staats C.C."/>
            <person name="Steffens M.B.R."/>
            <person name="Teixeira S.M.R."/>
            <person name="Urmenyi T.P."/>
            <person name="Vainstein M.H."/>
            <person name="Zuccherato L.W."/>
            <person name="Simpson A.J.G."/>
            <person name="Zaha A."/>
        </authorList>
    </citation>
    <scope>NUCLEOTIDE SEQUENCE [LARGE SCALE GENOMIC DNA]</scope>
    <source>
        <strain>J / ATCC 25934 / NCTC 10110</strain>
    </source>
</reference>
<protein>
    <recommendedName>
        <fullName evidence="1">Adenine phosphoribosyltransferase</fullName>
        <shortName evidence="1">APRT</shortName>
        <ecNumber evidence="1">2.4.2.7</ecNumber>
    </recommendedName>
</protein>
<evidence type="ECO:0000255" key="1">
    <source>
        <dbReference type="HAMAP-Rule" id="MF_00004"/>
    </source>
</evidence>
<sequence length="171" mass="18849">MQINLEKYIRTVEDFPKKGISFKDISPLLADGKALNYTIVEMASLAKDVDIIVGPDARGFLFGTPTAAFLSKPFIMIRKAGKLPGEVEEFAYELEYGSAILEVQVDMIKPGQKVAIIDDVLATGGTVKAITKMIERAGAIVDKIIFLIELEQLQGRKKLENYDVISLIKIS</sequence>
<accession>Q4AAL9</accession>
<dbReference type="EC" id="2.4.2.7" evidence="1"/>
<dbReference type="EMBL" id="AE017243">
    <property type="protein sequence ID" value="AAZ44202.2"/>
    <property type="molecule type" value="Genomic_DNA"/>
</dbReference>
<dbReference type="RefSeq" id="WP_011206103.1">
    <property type="nucleotide sequence ID" value="NC_007295.1"/>
</dbReference>
<dbReference type="SMR" id="Q4AAL9"/>
<dbReference type="GeneID" id="41334412"/>
<dbReference type="KEGG" id="mhj:MHJ_0110"/>
<dbReference type="eggNOG" id="COG0503">
    <property type="taxonomic scope" value="Bacteria"/>
</dbReference>
<dbReference type="HOGENOM" id="CLU_063339_3_0_14"/>
<dbReference type="OrthoDB" id="9803963at2"/>
<dbReference type="UniPathway" id="UPA00588">
    <property type="reaction ID" value="UER00646"/>
</dbReference>
<dbReference type="Proteomes" id="UP000000548">
    <property type="component" value="Chromosome"/>
</dbReference>
<dbReference type="GO" id="GO:0005737">
    <property type="term" value="C:cytoplasm"/>
    <property type="evidence" value="ECO:0007669"/>
    <property type="project" value="UniProtKB-SubCell"/>
</dbReference>
<dbReference type="GO" id="GO:0002055">
    <property type="term" value="F:adenine binding"/>
    <property type="evidence" value="ECO:0007669"/>
    <property type="project" value="TreeGrafter"/>
</dbReference>
<dbReference type="GO" id="GO:0003999">
    <property type="term" value="F:adenine phosphoribosyltransferase activity"/>
    <property type="evidence" value="ECO:0007669"/>
    <property type="project" value="UniProtKB-UniRule"/>
</dbReference>
<dbReference type="GO" id="GO:0016208">
    <property type="term" value="F:AMP binding"/>
    <property type="evidence" value="ECO:0007669"/>
    <property type="project" value="TreeGrafter"/>
</dbReference>
<dbReference type="GO" id="GO:0006168">
    <property type="term" value="P:adenine salvage"/>
    <property type="evidence" value="ECO:0007669"/>
    <property type="project" value="InterPro"/>
</dbReference>
<dbReference type="GO" id="GO:0044209">
    <property type="term" value="P:AMP salvage"/>
    <property type="evidence" value="ECO:0007669"/>
    <property type="project" value="UniProtKB-UniRule"/>
</dbReference>
<dbReference type="GO" id="GO:0006166">
    <property type="term" value="P:purine ribonucleoside salvage"/>
    <property type="evidence" value="ECO:0007669"/>
    <property type="project" value="UniProtKB-KW"/>
</dbReference>
<dbReference type="CDD" id="cd06223">
    <property type="entry name" value="PRTases_typeI"/>
    <property type="match status" value="1"/>
</dbReference>
<dbReference type="FunFam" id="3.40.50.2020:FF:000004">
    <property type="entry name" value="Adenine phosphoribosyltransferase"/>
    <property type="match status" value="1"/>
</dbReference>
<dbReference type="Gene3D" id="3.40.50.2020">
    <property type="match status" value="1"/>
</dbReference>
<dbReference type="HAMAP" id="MF_00004">
    <property type="entry name" value="Aden_phosphoribosyltr"/>
    <property type="match status" value="1"/>
</dbReference>
<dbReference type="InterPro" id="IPR005764">
    <property type="entry name" value="Ade_phspho_trans"/>
</dbReference>
<dbReference type="InterPro" id="IPR000836">
    <property type="entry name" value="PRibTrfase_dom"/>
</dbReference>
<dbReference type="InterPro" id="IPR029057">
    <property type="entry name" value="PRTase-like"/>
</dbReference>
<dbReference type="InterPro" id="IPR050054">
    <property type="entry name" value="UPRTase/APRTase"/>
</dbReference>
<dbReference type="NCBIfam" id="TIGR01090">
    <property type="entry name" value="apt"/>
    <property type="match status" value="1"/>
</dbReference>
<dbReference type="NCBIfam" id="NF002634">
    <property type="entry name" value="PRK02304.1-3"/>
    <property type="match status" value="1"/>
</dbReference>
<dbReference type="NCBIfam" id="NF002636">
    <property type="entry name" value="PRK02304.1-5"/>
    <property type="match status" value="1"/>
</dbReference>
<dbReference type="PANTHER" id="PTHR32315">
    <property type="entry name" value="ADENINE PHOSPHORIBOSYLTRANSFERASE"/>
    <property type="match status" value="1"/>
</dbReference>
<dbReference type="PANTHER" id="PTHR32315:SF3">
    <property type="entry name" value="ADENINE PHOSPHORIBOSYLTRANSFERASE"/>
    <property type="match status" value="1"/>
</dbReference>
<dbReference type="Pfam" id="PF00156">
    <property type="entry name" value="Pribosyltran"/>
    <property type="match status" value="1"/>
</dbReference>
<dbReference type="SUPFAM" id="SSF53271">
    <property type="entry name" value="PRTase-like"/>
    <property type="match status" value="1"/>
</dbReference>
<name>APT_MESHJ</name>
<feature type="chain" id="PRO_1000000310" description="Adenine phosphoribosyltransferase">
    <location>
        <begin position="1"/>
        <end position="171"/>
    </location>
</feature>
<organism>
    <name type="scientific">Mesomycoplasma hyopneumoniae (strain J / ATCC 25934 / NCTC 10110)</name>
    <name type="common">Mycoplasma hyopneumoniae</name>
    <dbReference type="NCBI Taxonomy" id="262719"/>
    <lineage>
        <taxon>Bacteria</taxon>
        <taxon>Bacillati</taxon>
        <taxon>Mycoplasmatota</taxon>
        <taxon>Mycoplasmoidales</taxon>
        <taxon>Metamycoplasmataceae</taxon>
        <taxon>Mesomycoplasma</taxon>
    </lineage>
</organism>
<proteinExistence type="inferred from homology"/>
<comment type="function">
    <text evidence="1">Catalyzes a salvage reaction resulting in the formation of AMP, that is energically less costly than de novo synthesis.</text>
</comment>
<comment type="catalytic activity">
    <reaction evidence="1">
        <text>AMP + diphosphate = 5-phospho-alpha-D-ribose 1-diphosphate + adenine</text>
        <dbReference type="Rhea" id="RHEA:16609"/>
        <dbReference type="ChEBI" id="CHEBI:16708"/>
        <dbReference type="ChEBI" id="CHEBI:33019"/>
        <dbReference type="ChEBI" id="CHEBI:58017"/>
        <dbReference type="ChEBI" id="CHEBI:456215"/>
        <dbReference type="EC" id="2.4.2.7"/>
    </reaction>
</comment>
<comment type="pathway">
    <text evidence="1">Purine metabolism; AMP biosynthesis via salvage pathway; AMP from adenine: step 1/1.</text>
</comment>
<comment type="subunit">
    <text evidence="1">Homodimer.</text>
</comment>
<comment type="subcellular location">
    <subcellularLocation>
        <location evidence="1">Cytoplasm</location>
    </subcellularLocation>
</comment>
<comment type="similarity">
    <text evidence="1">Belongs to the purine/pyrimidine phosphoribosyltransferase family.</text>
</comment>
<keyword id="KW-0963">Cytoplasm</keyword>
<keyword id="KW-0328">Glycosyltransferase</keyword>
<keyword id="KW-0660">Purine salvage</keyword>
<keyword id="KW-0808">Transferase</keyword>
<gene>
    <name evidence="1" type="primary">apt</name>
    <name type="ordered locus">MHJ_0110</name>
</gene>